<accession>B3DP24</accession>
<gene>
    <name evidence="1" type="primary">rnpA</name>
    <name type="ordered locus">BLD_1438</name>
</gene>
<protein>
    <recommendedName>
        <fullName evidence="1">Ribonuclease P protein component</fullName>
        <shortName evidence="1">RNase P protein</shortName>
        <shortName evidence="1">RNaseP protein</shortName>
        <ecNumber evidence="1">3.1.26.5</ecNumber>
    </recommendedName>
    <alternativeName>
        <fullName evidence="1">Protein C5</fullName>
    </alternativeName>
</protein>
<comment type="function">
    <text evidence="1">RNaseP catalyzes the removal of the 5'-leader sequence from pre-tRNA to produce the mature 5'-terminus. It can also cleave other RNA substrates such as 4.5S RNA. The protein component plays an auxiliary but essential role in vivo by binding to the 5'-leader sequence and broadening the substrate specificity of the ribozyme.</text>
</comment>
<comment type="catalytic activity">
    <reaction evidence="1">
        <text>Endonucleolytic cleavage of RNA, removing 5'-extranucleotides from tRNA precursor.</text>
        <dbReference type="EC" id="3.1.26.5"/>
    </reaction>
</comment>
<comment type="subunit">
    <text evidence="1">Consists of a catalytic RNA component (M1 or rnpB) and a protein subunit.</text>
</comment>
<comment type="similarity">
    <text evidence="1">Belongs to the RnpA family.</text>
</comment>
<name>RNPA_BIFLD</name>
<organism>
    <name type="scientific">Bifidobacterium longum (strain DJO10A)</name>
    <dbReference type="NCBI Taxonomy" id="205913"/>
    <lineage>
        <taxon>Bacteria</taxon>
        <taxon>Bacillati</taxon>
        <taxon>Actinomycetota</taxon>
        <taxon>Actinomycetes</taxon>
        <taxon>Bifidobacteriales</taxon>
        <taxon>Bifidobacteriaceae</taxon>
        <taxon>Bifidobacterium</taxon>
    </lineage>
</organism>
<keyword id="KW-0255">Endonuclease</keyword>
<keyword id="KW-0378">Hydrolase</keyword>
<keyword id="KW-0540">Nuclease</keyword>
<keyword id="KW-0694">RNA-binding</keyword>
<keyword id="KW-0819">tRNA processing</keyword>
<reference key="1">
    <citation type="journal article" date="2008" name="BMC Genomics">
        <title>Comparative genomic analysis of the gut bacterium Bifidobacterium longum reveals loci susceptible to deletion during pure culture growth.</title>
        <authorList>
            <person name="Lee J.H."/>
            <person name="Karamychev V.N."/>
            <person name="Kozyavkin S.A."/>
            <person name="Mills D."/>
            <person name="Pavlov A.R."/>
            <person name="Pavlova N.V."/>
            <person name="Polouchine N.N."/>
            <person name="Richardson P.M."/>
            <person name="Shakhova V.V."/>
            <person name="Slesarev A.I."/>
            <person name="Weimer B."/>
            <person name="O'Sullivan D.J."/>
        </authorList>
    </citation>
    <scope>NUCLEOTIDE SEQUENCE [LARGE SCALE GENOMIC DNA]</scope>
    <source>
        <strain>DJO10A</strain>
    </source>
</reference>
<sequence>MERLQSHRDFVTVLKRRRKAGGKDIVVHYLVPDDHHDDDDRTVHRRLGLAVSKSVGHAVTRNTVKRRFRVLARAHEDLLPAHCDIVLRAKPSAATASFASLDQQIAKAFATVAHKVAEA</sequence>
<evidence type="ECO:0000255" key="1">
    <source>
        <dbReference type="HAMAP-Rule" id="MF_00227"/>
    </source>
</evidence>
<dbReference type="EC" id="3.1.26.5" evidence="1"/>
<dbReference type="EMBL" id="CP000605">
    <property type="protein sequence ID" value="ACD98883.1"/>
    <property type="molecule type" value="Genomic_DNA"/>
</dbReference>
<dbReference type="RefSeq" id="WP_007051769.1">
    <property type="nucleotide sequence ID" value="NZ_AABM02000008.1"/>
</dbReference>
<dbReference type="SMR" id="B3DP24"/>
<dbReference type="GeneID" id="69579148"/>
<dbReference type="KEGG" id="blj:BLD_1438"/>
<dbReference type="HOGENOM" id="CLU_117179_4_0_11"/>
<dbReference type="Proteomes" id="UP000002419">
    <property type="component" value="Chromosome"/>
</dbReference>
<dbReference type="GO" id="GO:0030677">
    <property type="term" value="C:ribonuclease P complex"/>
    <property type="evidence" value="ECO:0007669"/>
    <property type="project" value="TreeGrafter"/>
</dbReference>
<dbReference type="GO" id="GO:0042781">
    <property type="term" value="F:3'-tRNA processing endoribonuclease activity"/>
    <property type="evidence" value="ECO:0007669"/>
    <property type="project" value="TreeGrafter"/>
</dbReference>
<dbReference type="GO" id="GO:0004526">
    <property type="term" value="F:ribonuclease P activity"/>
    <property type="evidence" value="ECO:0007669"/>
    <property type="project" value="UniProtKB-UniRule"/>
</dbReference>
<dbReference type="GO" id="GO:0000049">
    <property type="term" value="F:tRNA binding"/>
    <property type="evidence" value="ECO:0007669"/>
    <property type="project" value="UniProtKB-UniRule"/>
</dbReference>
<dbReference type="GO" id="GO:0001682">
    <property type="term" value="P:tRNA 5'-leader removal"/>
    <property type="evidence" value="ECO:0007669"/>
    <property type="project" value="UniProtKB-UniRule"/>
</dbReference>
<dbReference type="Gene3D" id="3.30.230.10">
    <property type="match status" value="1"/>
</dbReference>
<dbReference type="HAMAP" id="MF_00227">
    <property type="entry name" value="RNase_P"/>
    <property type="match status" value="1"/>
</dbReference>
<dbReference type="InterPro" id="IPR020568">
    <property type="entry name" value="Ribosomal_Su5_D2-typ_SF"/>
</dbReference>
<dbReference type="InterPro" id="IPR014721">
    <property type="entry name" value="Ribsml_uS5_D2-typ_fold_subgr"/>
</dbReference>
<dbReference type="InterPro" id="IPR000100">
    <property type="entry name" value="RNase_P"/>
</dbReference>
<dbReference type="NCBIfam" id="TIGR00188">
    <property type="entry name" value="rnpA"/>
    <property type="match status" value="1"/>
</dbReference>
<dbReference type="PANTHER" id="PTHR33992">
    <property type="entry name" value="RIBONUCLEASE P PROTEIN COMPONENT"/>
    <property type="match status" value="1"/>
</dbReference>
<dbReference type="PANTHER" id="PTHR33992:SF1">
    <property type="entry name" value="RIBONUCLEASE P PROTEIN COMPONENT"/>
    <property type="match status" value="1"/>
</dbReference>
<dbReference type="Pfam" id="PF00825">
    <property type="entry name" value="Ribonuclease_P"/>
    <property type="match status" value="1"/>
</dbReference>
<dbReference type="SUPFAM" id="SSF54211">
    <property type="entry name" value="Ribosomal protein S5 domain 2-like"/>
    <property type="match status" value="1"/>
</dbReference>
<proteinExistence type="inferred from homology"/>
<feature type="chain" id="PRO_1000194609" description="Ribonuclease P protein component">
    <location>
        <begin position="1"/>
        <end position="119"/>
    </location>
</feature>